<accession>B4MEG2</accession>
<gene>
    <name evidence="2" type="primary">NAAT1</name>
    <name type="ORF">GJ14810</name>
</gene>
<organism>
    <name type="scientific">Drosophila virilis</name>
    <name type="common">Fruit fly</name>
    <dbReference type="NCBI Taxonomy" id="7244"/>
    <lineage>
        <taxon>Eukaryota</taxon>
        <taxon>Metazoa</taxon>
        <taxon>Ecdysozoa</taxon>
        <taxon>Arthropoda</taxon>
        <taxon>Hexapoda</taxon>
        <taxon>Insecta</taxon>
        <taxon>Pterygota</taxon>
        <taxon>Neoptera</taxon>
        <taxon>Endopterygota</taxon>
        <taxon>Diptera</taxon>
        <taxon>Brachycera</taxon>
        <taxon>Muscomorpha</taxon>
        <taxon>Ephydroidea</taxon>
        <taxon>Drosophilidae</taxon>
        <taxon>Drosophila</taxon>
    </lineage>
</organism>
<comment type="function">
    <text evidence="1">Unusual broad substrate spectrum amino acid:sodium cotransporter that promotes absorption of the D isomers of essential amino acids. Neutral amino acids are the preferred substrates, especially methionine and phenylalanine (By similarity).</text>
</comment>
<comment type="subcellular location">
    <subcellularLocation>
        <location evidence="5">Membrane</location>
        <topology evidence="5">Multi-pass membrane protein</topology>
    </subcellularLocation>
</comment>
<comment type="similarity">
    <text evidence="5">Belongs to the sodium:neurotransmitter symporter (SNF) (TC 2.A.22) family.</text>
</comment>
<dbReference type="EMBL" id="CH940664">
    <property type="protein sequence ID" value="EDW62937.1"/>
    <property type="molecule type" value="Genomic_DNA"/>
</dbReference>
<dbReference type="RefSeq" id="XP_002059515.1">
    <property type="nucleotide sequence ID" value="XM_002059479.4"/>
</dbReference>
<dbReference type="SMR" id="B4MEG2"/>
<dbReference type="FunCoup" id="B4MEG2">
    <property type="interactions" value="43"/>
</dbReference>
<dbReference type="STRING" id="7244.B4MEG2"/>
<dbReference type="GlyCosmos" id="B4MEG2">
    <property type="glycosylation" value="2 sites, No reported glycans"/>
</dbReference>
<dbReference type="EnsemblMetazoa" id="FBtr0230735">
    <property type="protein sequence ID" value="FBpp0229227"/>
    <property type="gene ID" value="FBgn0202014"/>
</dbReference>
<dbReference type="EnsemblMetazoa" id="XM_002059479.3">
    <property type="protein sequence ID" value="XP_002059515.1"/>
    <property type="gene ID" value="LOC6636051"/>
</dbReference>
<dbReference type="GeneID" id="6636051"/>
<dbReference type="KEGG" id="dvi:6636051"/>
<dbReference type="CTD" id="31457"/>
<dbReference type="eggNOG" id="KOG3660">
    <property type="taxonomic scope" value="Eukaryota"/>
</dbReference>
<dbReference type="HOGENOM" id="CLU_006855_9_5_1"/>
<dbReference type="InParanoid" id="B4MEG2"/>
<dbReference type="OMA" id="LQNFCDD"/>
<dbReference type="OrthoDB" id="6581954at2759"/>
<dbReference type="PhylomeDB" id="B4MEG2"/>
<dbReference type="Proteomes" id="UP000008792">
    <property type="component" value="Unassembled WGS sequence"/>
</dbReference>
<dbReference type="GO" id="GO:0005886">
    <property type="term" value="C:plasma membrane"/>
    <property type="evidence" value="ECO:0000305"/>
    <property type="project" value="UniProtKB"/>
</dbReference>
<dbReference type="GO" id="GO:0005283">
    <property type="term" value="F:amino acid:sodium symporter activity"/>
    <property type="evidence" value="ECO:0000250"/>
    <property type="project" value="UniProtKB"/>
</dbReference>
<dbReference type="GO" id="GO:0042943">
    <property type="term" value="F:D-amino acid transmembrane transporter activity"/>
    <property type="evidence" value="ECO:0000250"/>
    <property type="project" value="UniProtKB"/>
</dbReference>
<dbReference type="GO" id="GO:0015179">
    <property type="term" value="F:L-amino acid transmembrane transporter activity"/>
    <property type="evidence" value="ECO:0007669"/>
    <property type="project" value="EnsemblMetazoa"/>
</dbReference>
<dbReference type="GO" id="GO:0015175">
    <property type="term" value="F:neutral L-amino acid transmembrane transporter activity"/>
    <property type="evidence" value="ECO:0000250"/>
    <property type="project" value="UniProtKB"/>
</dbReference>
<dbReference type="GO" id="GO:0089718">
    <property type="term" value="P:amino acid import across plasma membrane"/>
    <property type="evidence" value="ECO:0007669"/>
    <property type="project" value="TreeGrafter"/>
</dbReference>
<dbReference type="GO" id="GO:0042940">
    <property type="term" value="P:D-amino acid transport"/>
    <property type="evidence" value="ECO:0000250"/>
    <property type="project" value="UniProtKB"/>
</dbReference>
<dbReference type="GO" id="GO:0015804">
    <property type="term" value="P:neutral amino acid transport"/>
    <property type="evidence" value="ECO:0000250"/>
    <property type="project" value="UniProtKB"/>
</dbReference>
<dbReference type="GO" id="GO:0006814">
    <property type="term" value="P:sodium ion transport"/>
    <property type="evidence" value="ECO:0000250"/>
    <property type="project" value="UniProtKB"/>
</dbReference>
<dbReference type="CDD" id="cd10324">
    <property type="entry name" value="SLC6sbd"/>
    <property type="match status" value="1"/>
</dbReference>
<dbReference type="InterPro" id="IPR000175">
    <property type="entry name" value="Na/ntran_symport"/>
</dbReference>
<dbReference type="InterPro" id="IPR037272">
    <property type="entry name" value="SNS_sf"/>
</dbReference>
<dbReference type="PANTHER" id="PTHR11616:SF321">
    <property type="entry name" value="SODIUM-DEPENDENT NUTRIENT AMINO ACID TRANSPORTER 1-RELATED"/>
    <property type="match status" value="1"/>
</dbReference>
<dbReference type="PANTHER" id="PTHR11616">
    <property type="entry name" value="SODIUM/CHLORIDE DEPENDENT TRANSPORTER"/>
    <property type="match status" value="1"/>
</dbReference>
<dbReference type="Pfam" id="PF00209">
    <property type="entry name" value="SNF"/>
    <property type="match status" value="1"/>
</dbReference>
<dbReference type="PRINTS" id="PR00176">
    <property type="entry name" value="NANEUSMPORT"/>
</dbReference>
<dbReference type="SUPFAM" id="SSF161070">
    <property type="entry name" value="SNF-like"/>
    <property type="match status" value="1"/>
</dbReference>
<dbReference type="PROSITE" id="PS00610">
    <property type="entry name" value="NA_NEUROTRAN_SYMP_1"/>
    <property type="match status" value="1"/>
</dbReference>
<dbReference type="PROSITE" id="PS50267">
    <property type="entry name" value="NA_NEUROTRAN_SYMP_3"/>
    <property type="match status" value="1"/>
</dbReference>
<proteinExistence type="inferred from homology"/>
<feature type="chain" id="PRO_0000386588" description="Sodium-dependent nutrient amino acid transporter 1">
    <location>
        <begin position="1"/>
        <end position="637"/>
    </location>
</feature>
<feature type="topological domain" description="Cytoplasmic" evidence="3">
    <location>
        <begin position="1"/>
        <end position="47"/>
    </location>
</feature>
<feature type="transmembrane region" description="Helical; Name=1" evidence="3">
    <location>
        <begin position="48"/>
        <end position="68"/>
    </location>
</feature>
<feature type="transmembrane region" description="Helical; Name=2" evidence="3">
    <location>
        <begin position="75"/>
        <end position="95"/>
    </location>
</feature>
<feature type="transmembrane region" description="Helical; Name=3" evidence="3">
    <location>
        <begin position="128"/>
        <end position="148"/>
    </location>
</feature>
<feature type="transmembrane region" description="Helical; Name=4" evidence="3">
    <location>
        <begin position="225"/>
        <end position="245"/>
    </location>
</feature>
<feature type="transmembrane region" description="Helical; Name=5" evidence="3">
    <location>
        <begin position="254"/>
        <end position="274"/>
    </location>
</feature>
<feature type="transmembrane region" description="Helical; Name=6" evidence="3">
    <location>
        <begin position="303"/>
        <end position="323"/>
    </location>
</feature>
<feature type="transmembrane region" description="Helical; Name=7" evidence="3">
    <location>
        <begin position="337"/>
        <end position="357"/>
    </location>
</feature>
<feature type="transmembrane region" description="Helical; Name=8" evidence="3">
    <location>
        <begin position="397"/>
        <end position="417"/>
    </location>
</feature>
<feature type="transmembrane region" description="Helical; Name=9" evidence="3">
    <location>
        <begin position="443"/>
        <end position="463"/>
    </location>
</feature>
<feature type="transmembrane region" description="Helical; Name=10" evidence="3">
    <location>
        <begin position="470"/>
        <end position="490"/>
    </location>
</feature>
<feature type="transmembrane region" description="Helical; Name=11" evidence="3">
    <location>
        <begin position="515"/>
        <end position="535"/>
    </location>
</feature>
<feature type="transmembrane region" description="Helical; Name=12" evidence="3">
    <location>
        <begin position="549"/>
        <end position="569"/>
    </location>
</feature>
<feature type="region of interest" description="Disordered" evidence="4">
    <location>
        <begin position="1"/>
        <end position="39"/>
    </location>
</feature>
<feature type="compositionally biased region" description="Polar residues" evidence="4">
    <location>
        <begin position="1"/>
        <end position="17"/>
    </location>
</feature>
<feature type="compositionally biased region" description="Basic and acidic residues" evidence="4">
    <location>
        <begin position="26"/>
        <end position="39"/>
    </location>
</feature>
<feature type="glycosylation site" description="N-linked (GlcNAc...) asparagine" evidence="3">
    <location>
        <position position="181"/>
    </location>
</feature>
<feature type="glycosylation site" description="N-linked (GlcNAc...) asparagine" evidence="3">
    <location>
        <position position="195"/>
    </location>
</feature>
<protein>
    <recommendedName>
        <fullName evidence="2">Sodium-dependent nutrient amino acid transporter 1</fullName>
    </recommendedName>
</protein>
<name>NAAT1_DROVI</name>
<evidence type="ECO:0000250" key="1"/>
<evidence type="ECO:0000250" key="2">
    <source>
        <dbReference type="UniProtKB" id="Q9W4C5"/>
    </source>
</evidence>
<evidence type="ECO:0000255" key="3"/>
<evidence type="ECO:0000256" key="4">
    <source>
        <dbReference type="SAM" id="MobiDB-lite"/>
    </source>
</evidence>
<evidence type="ECO:0000305" key="5"/>
<evidence type="ECO:0000312" key="6">
    <source>
        <dbReference type="EMBL" id="EDW62937.1"/>
    </source>
</evidence>
<reference evidence="6" key="1">
    <citation type="journal article" date="2007" name="Nature">
        <title>Evolution of genes and genomes on the Drosophila phylogeny.</title>
        <authorList>
            <consortium name="Drosophila 12 genomes consortium"/>
        </authorList>
    </citation>
    <scope>NUCLEOTIDE SEQUENCE [LARGE SCALE GENOMIC DNA]</scope>
    <source>
        <strain evidence="6">Tucson 15010-1051.87</strain>
    </source>
</reference>
<keyword id="KW-0029">Amino-acid transport</keyword>
<keyword id="KW-0325">Glycoprotein</keyword>
<keyword id="KW-0406">Ion transport</keyword>
<keyword id="KW-0472">Membrane</keyword>
<keyword id="KW-1185">Reference proteome</keyword>
<keyword id="KW-0915">Sodium</keyword>
<keyword id="KW-0739">Sodium transport</keyword>
<keyword id="KW-0769">Symport</keyword>
<keyword id="KW-0812">Transmembrane</keyword>
<keyword id="KW-1133">Transmembrane helix</keyword>
<keyword id="KW-0813">Transport</keyword>
<sequence length="637" mass="71468">MELKTMPQNGANAGTQHNNNSNNKPDNNEKEAQKKEPERTNWSNGLEFLMSCISVSVGLGNVWRFPFTAYENGGGAFLIPYIIVLFLIGKPMYYLEMIIGQFTSQGTVKIWSICPSFMGVGYGQAFATICIITYYSSLLALTVYYLFVSFQSELPWSYCRDDWVNCVNSRPAEYVETLLTNASSALSRATESATNVTKLQSSSELYFLNVVIKEKSDITDGIGAPDWKLTIALFVSWVVIFLVIMRGVKSSGKAAYFLALFPYVVLFALLGRAVTLEGAVDGIIFFLQPQWGELLNPIVWKEAVVQCFFSLAVGCGPIIMFASYNRFDHGIYRDAMIVTTLDTLTSLLGGITIFAILGNLAHNLKVDNIRDVVRSGTGLAFISYPDAISKFQAVPQLFSALFFFMLFVLGIGSIVALQSTIVTIICDQFKTCKYWKVAMATSICGFLMGLVYVTPGGQWILTLVDFYGGTYVVFILAIFELAGIVWIYGLQNFCDDIEFMSNKKVSLYWRICWSFFTPIMMIVIFIYSMVTISPIKYSDTYFPVAGDVAGWVLFAVGAAQFPLWGWWYIRTHRHDSFSKSFMASLKPSEKWGPSNPETRRDWLLFKSDLAAKRAIQAKSNKMGFFRQKLYNLCGNSN</sequence>